<evidence type="ECO:0000255" key="1">
    <source>
        <dbReference type="HAMAP-Rule" id="MF_00328"/>
    </source>
</evidence>
<feature type="chain" id="PRO_0000266308" description="Guanylate kinase">
    <location>
        <begin position="1"/>
        <end position="216"/>
    </location>
</feature>
<feature type="domain" description="Guanylate kinase-like" evidence="1">
    <location>
        <begin position="11"/>
        <end position="189"/>
    </location>
</feature>
<feature type="binding site" evidence="1">
    <location>
        <begin position="18"/>
        <end position="25"/>
    </location>
    <ligand>
        <name>ATP</name>
        <dbReference type="ChEBI" id="CHEBI:30616"/>
    </ligand>
</feature>
<accession>Q0TPK6</accession>
<organism>
    <name type="scientific">Clostridium perfringens (strain ATCC 13124 / DSM 756 / JCM 1290 / NCIMB 6125 / NCTC 8237 / Type A)</name>
    <dbReference type="NCBI Taxonomy" id="195103"/>
    <lineage>
        <taxon>Bacteria</taxon>
        <taxon>Bacillati</taxon>
        <taxon>Bacillota</taxon>
        <taxon>Clostridia</taxon>
        <taxon>Eubacteriales</taxon>
        <taxon>Clostridiaceae</taxon>
        <taxon>Clostridium</taxon>
    </lineage>
</organism>
<keyword id="KW-0067">ATP-binding</keyword>
<keyword id="KW-0963">Cytoplasm</keyword>
<keyword id="KW-0418">Kinase</keyword>
<keyword id="KW-0547">Nucleotide-binding</keyword>
<keyword id="KW-0808">Transferase</keyword>
<gene>
    <name evidence="1" type="primary">gmk</name>
    <name type="ordered locus">CPF_2001</name>
</gene>
<reference key="1">
    <citation type="journal article" date="2006" name="Genome Res.">
        <title>Skewed genomic variability in strains of the toxigenic bacterial pathogen, Clostridium perfringens.</title>
        <authorList>
            <person name="Myers G.S.A."/>
            <person name="Rasko D.A."/>
            <person name="Cheung J.K."/>
            <person name="Ravel J."/>
            <person name="Seshadri R."/>
            <person name="DeBoy R.T."/>
            <person name="Ren Q."/>
            <person name="Varga J."/>
            <person name="Awad M.M."/>
            <person name="Brinkac L.M."/>
            <person name="Daugherty S.C."/>
            <person name="Haft D.H."/>
            <person name="Dodson R.J."/>
            <person name="Madupu R."/>
            <person name="Nelson W.C."/>
            <person name="Rosovitz M.J."/>
            <person name="Sullivan S.A."/>
            <person name="Khouri H."/>
            <person name="Dimitrov G.I."/>
            <person name="Watkins K.L."/>
            <person name="Mulligan S."/>
            <person name="Benton J."/>
            <person name="Radune D."/>
            <person name="Fisher D.J."/>
            <person name="Atkins H.S."/>
            <person name="Hiscox T."/>
            <person name="Jost B.H."/>
            <person name="Billington S.J."/>
            <person name="Songer J.G."/>
            <person name="McClane B.A."/>
            <person name="Titball R.W."/>
            <person name="Rood J.I."/>
            <person name="Melville S.B."/>
            <person name="Paulsen I.T."/>
        </authorList>
    </citation>
    <scope>NUCLEOTIDE SEQUENCE [LARGE SCALE GENOMIC DNA]</scope>
    <source>
        <strain>ATCC 13124 / DSM 756 / JCM 1290 / NCIMB 6125 / NCTC 8237 / S 107 / Type A</strain>
    </source>
</reference>
<protein>
    <recommendedName>
        <fullName evidence="1">Guanylate kinase</fullName>
        <ecNumber evidence="1">2.7.4.8</ecNumber>
    </recommendedName>
    <alternativeName>
        <fullName evidence="1">GMP kinase</fullName>
    </alternativeName>
</protein>
<sequence length="216" mass="24591">MMNKIHKDNRGVLIVISGPSGAGKGTICKALLEKHDDIFISVSATTRNPRVGEVDGVNYHFLTKEEFKQRIAEDDFLEHAEVYGNYYGTPKSSVEKMLDEGKNVILEIDIQGALKVKEKATDGVFIFILPPSMEELKQRIIKRGSETPESLMTRFKSAYKEINYVSKYNYAVVNDNVEDAVKKIEAILLAEKCRVDRLKENLLESKEDEMHEQLYD</sequence>
<proteinExistence type="inferred from homology"/>
<name>KGUA_CLOP1</name>
<comment type="function">
    <text evidence="1">Essential for recycling GMP and indirectly, cGMP.</text>
</comment>
<comment type="catalytic activity">
    <reaction evidence="1">
        <text>GMP + ATP = GDP + ADP</text>
        <dbReference type="Rhea" id="RHEA:20780"/>
        <dbReference type="ChEBI" id="CHEBI:30616"/>
        <dbReference type="ChEBI" id="CHEBI:58115"/>
        <dbReference type="ChEBI" id="CHEBI:58189"/>
        <dbReference type="ChEBI" id="CHEBI:456216"/>
        <dbReference type="EC" id="2.7.4.8"/>
    </reaction>
</comment>
<comment type="subcellular location">
    <subcellularLocation>
        <location evidence="1">Cytoplasm</location>
    </subcellularLocation>
</comment>
<comment type="similarity">
    <text evidence="1">Belongs to the guanylate kinase family.</text>
</comment>
<dbReference type="EC" id="2.7.4.8" evidence="1"/>
<dbReference type="EMBL" id="CP000246">
    <property type="protein sequence ID" value="ABG82421.1"/>
    <property type="molecule type" value="Genomic_DNA"/>
</dbReference>
<dbReference type="RefSeq" id="WP_011590947.1">
    <property type="nucleotide sequence ID" value="NC_008261.1"/>
</dbReference>
<dbReference type="SMR" id="Q0TPK6"/>
<dbReference type="STRING" id="195103.CPF_2001"/>
<dbReference type="PaxDb" id="195103-CPF_2001"/>
<dbReference type="GeneID" id="93001715"/>
<dbReference type="KEGG" id="cpf:CPF_2001"/>
<dbReference type="eggNOG" id="COG0194">
    <property type="taxonomic scope" value="Bacteria"/>
</dbReference>
<dbReference type="HOGENOM" id="CLU_001715_1_2_9"/>
<dbReference type="Proteomes" id="UP000001823">
    <property type="component" value="Chromosome"/>
</dbReference>
<dbReference type="GO" id="GO:0005829">
    <property type="term" value="C:cytosol"/>
    <property type="evidence" value="ECO:0007669"/>
    <property type="project" value="TreeGrafter"/>
</dbReference>
<dbReference type="GO" id="GO:0005524">
    <property type="term" value="F:ATP binding"/>
    <property type="evidence" value="ECO:0007669"/>
    <property type="project" value="UniProtKB-UniRule"/>
</dbReference>
<dbReference type="GO" id="GO:0004385">
    <property type="term" value="F:guanylate kinase activity"/>
    <property type="evidence" value="ECO:0007669"/>
    <property type="project" value="UniProtKB-UniRule"/>
</dbReference>
<dbReference type="CDD" id="cd00071">
    <property type="entry name" value="GMPK"/>
    <property type="match status" value="1"/>
</dbReference>
<dbReference type="FunFam" id="3.40.50.300:FF:000855">
    <property type="entry name" value="Guanylate kinase"/>
    <property type="match status" value="1"/>
</dbReference>
<dbReference type="FunFam" id="3.30.63.10:FF:000002">
    <property type="entry name" value="Guanylate kinase 1"/>
    <property type="match status" value="1"/>
</dbReference>
<dbReference type="Gene3D" id="3.30.63.10">
    <property type="entry name" value="Guanylate Kinase phosphate binding domain"/>
    <property type="match status" value="1"/>
</dbReference>
<dbReference type="Gene3D" id="3.40.50.300">
    <property type="entry name" value="P-loop containing nucleotide triphosphate hydrolases"/>
    <property type="match status" value="1"/>
</dbReference>
<dbReference type="HAMAP" id="MF_00328">
    <property type="entry name" value="Guanylate_kinase"/>
    <property type="match status" value="1"/>
</dbReference>
<dbReference type="InterPro" id="IPR008145">
    <property type="entry name" value="GK/Ca_channel_bsu"/>
</dbReference>
<dbReference type="InterPro" id="IPR008144">
    <property type="entry name" value="Guanylate_kin-like_dom"/>
</dbReference>
<dbReference type="InterPro" id="IPR017665">
    <property type="entry name" value="Guanylate_kinase"/>
</dbReference>
<dbReference type="InterPro" id="IPR020590">
    <property type="entry name" value="Guanylate_kinase_CS"/>
</dbReference>
<dbReference type="InterPro" id="IPR027417">
    <property type="entry name" value="P-loop_NTPase"/>
</dbReference>
<dbReference type="NCBIfam" id="TIGR03263">
    <property type="entry name" value="guanyl_kin"/>
    <property type="match status" value="1"/>
</dbReference>
<dbReference type="PANTHER" id="PTHR23117:SF13">
    <property type="entry name" value="GUANYLATE KINASE"/>
    <property type="match status" value="1"/>
</dbReference>
<dbReference type="PANTHER" id="PTHR23117">
    <property type="entry name" value="GUANYLATE KINASE-RELATED"/>
    <property type="match status" value="1"/>
</dbReference>
<dbReference type="Pfam" id="PF00625">
    <property type="entry name" value="Guanylate_kin"/>
    <property type="match status" value="1"/>
</dbReference>
<dbReference type="SMART" id="SM00072">
    <property type="entry name" value="GuKc"/>
    <property type="match status" value="1"/>
</dbReference>
<dbReference type="SUPFAM" id="SSF52540">
    <property type="entry name" value="P-loop containing nucleoside triphosphate hydrolases"/>
    <property type="match status" value="1"/>
</dbReference>
<dbReference type="PROSITE" id="PS00856">
    <property type="entry name" value="GUANYLATE_KINASE_1"/>
    <property type="match status" value="1"/>
</dbReference>
<dbReference type="PROSITE" id="PS50052">
    <property type="entry name" value="GUANYLATE_KINASE_2"/>
    <property type="match status" value="1"/>
</dbReference>